<reference key="1">
    <citation type="journal article" date="1994" name="Eur. J. Biochem.">
        <title>The (2R)-hydroxycarboxylate-viologen-oxidoreductase from Proteus vulgaris is a molybdenum-containing iron-sulphur protein.</title>
        <authorList>
            <person name="Trautwein T."/>
            <person name="Krauss F."/>
            <person name="Lottspeich F."/>
            <person name="Simon H."/>
        </authorList>
    </citation>
    <scope>PROTEIN SEQUENCE</scope>
    <scope>FUNCTION</scope>
    <scope>CATALYTIC ACTIVITY</scope>
    <scope>COFACTOR</scope>
    <scope>SUBCELLULAR LOCATION</scope>
    <scope>SUBUNIT</scope>
    <scope>ACTIVITY REGULATION</scope>
    <source>
        <strain>ATCC 13315 / DSM 30118 / JCM 1668 / NBRC 3851 / NCIMB 4175 / NCTC 4175 / NRRL B-3405</strain>
    </source>
</reference>
<sequence>MINGWTGNILRINLTTGAIS</sequence>
<organism>
    <name type="scientific">Proteus hauseri</name>
    <dbReference type="NCBI Taxonomy" id="183417"/>
    <lineage>
        <taxon>Bacteria</taxon>
        <taxon>Pseudomonadati</taxon>
        <taxon>Pseudomonadota</taxon>
        <taxon>Gammaproteobacteria</taxon>
        <taxon>Enterobacterales</taxon>
        <taxon>Morganellaceae</taxon>
        <taxon>Proteus</taxon>
    </lineage>
</organism>
<proteinExistence type="evidence at protein level"/>
<accession>Q9R4Y1</accession>
<feature type="chain" id="PRO_0000408495" description="2-oxo-acid reductase">
    <location>
        <begin position="1"/>
        <end position="20" status="greater than"/>
    </location>
</feature>
<feature type="non-terminal residue">
    <location>
        <position position="20"/>
    </location>
</feature>
<comment type="function">
    <text evidence="1">Oxidoreductase with an extremely broad substrate specificity that can reduce reversibly 2-oxocarboxylates to (2R)-hydroxycarboxylates.</text>
</comment>
<comment type="catalytic activity">
    <reaction evidence="1">
        <text>a (2R)-2-hydroxycarboxylate + A = a 2-oxocarboxylate + AH2</text>
        <dbReference type="Rhea" id="RHEA:23664"/>
        <dbReference type="ChEBI" id="CHEBI:13193"/>
        <dbReference type="ChEBI" id="CHEBI:17499"/>
        <dbReference type="ChEBI" id="CHEBI:35179"/>
        <dbReference type="ChEBI" id="CHEBI:58314"/>
        <dbReference type="EC" id="1.1.99.30"/>
    </reaction>
</comment>
<comment type="cofactor">
    <cofactor evidence="1">
        <name>[4Fe-4S] cluster</name>
        <dbReference type="ChEBI" id="CHEBI:49883"/>
    </cofactor>
    <text evidence="1">Binds 1 [4Fe-4S] cluster per subunit.</text>
</comment>
<comment type="cofactor">
    <cofactor evidence="1">
        <name>Mo-molybdopterin</name>
        <dbReference type="ChEBI" id="CHEBI:71302"/>
    </cofactor>
    <text evidence="1">Binds 1 Mo-molybdopterin (Mo-MPT) cofactor per subunit.</text>
</comment>
<comment type="activity regulation">
    <text evidence="1">Is inhibited by cyanide. Is sensitive to oxygen.</text>
</comment>
<comment type="subunit">
    <text evidence="1">Forms various types of homooligomers.</text>
</comment>
<comment type="subcellular location">
    <subcellularLocation>
        <location evidence="1">Cell membrane</location>
    </subcellularLocation>
</comment>
<comment type="similarity">
    <text evidence="3">Belongs to the AOR/FOR family.</text>
</comment>
<protein>
    <recommendedName>
        <fullName>2-oxo-acid reductase</fullName>
        <ecNumber evidence="1">1.1.99.30</ecNumber>
    </recommendedName>
    <alternativeName>
        <fullName evidence="2">(2R)-hydroxycarboxylate-viologen-oxidoreductase</fullName>
        <shortName>HVOR</shortName>
    </alternativeName>
</protein>
<dbReference type="EC" id="1.1.99.30" evidence="1"/>
<dbReference type="PIR" id="S45637">
    <property type="entry name" value="S45637"/>
</dbReference>
<dbReference type="STRING" id="585.DR95_1848"/>
<dbReference type="eggNOG" id="COG2414">
    <property type="taxonomic scope" value="Bacteria"/>
</dbReference>
<dbReference type="GO" id="GO:0005886">
    <property type="term" value="C:plasma membrane"/>
    <property type="evidence" value="ECO:0000314"/>
    <property type="project" value="UniProtKB"/>
</dbReference>
<dbReference type="GO" id="GO:0033719">
    <property type="term" value="F:2-oxo-acid reductase activity"/>
    <property type="evidence" value="ECO:0000314"/>
    <property type="project" value="UniProtKB"/>
</dbReference>
<dbReference type="GO" id="GO:0051539">
    <property type="term" value="F:4 iron, 4 sulfur cluster binding"/>
    <property type="evidence" value="ECO:0000314"/>
    <property type="project" value="UniProtKB"/>
</dbReference>
<dbReference type="GO" id="GO:0030151">
    <property type="term" value="F:molybdenum ion binding"/>
    <property type="evidence" value="ECO:0000314"/>
    <property type="project" value="UniProtKB"/>
</dbReference>
<dbReference type="GO" id="GO:0043546">
    <property type="term" value="F:molybdopterin cofactor binding"/>
    <property type="evidence" value="ECO:0000314"/>
    <property type="project" value="UniProtKB"/>
</dbReference>
<name>HVOR_PROHU</name>
<evidence type="ECO:0000269" key="1">
    <source>
    </source>
</evidence>
<evidence type="ECO:0000303" key="2">
    <source>
    </source>
</evidence>
<evidence type="ECO:0000305" key="3"/>
<keyword id="KW-0004">4Fe-4S</keyword>
<keyword id="KW-1003">Cell membrane</keyword>
<keyword id="KW-0903">Direct protein sequencing</keyword>
<keyword id="KW-0408">Iron</keyword>
<keyword id="KW-0411">Iron-sulfur</keyword>
<keyword id="KW-0472">Membrane</keyword>
<keyword id="KW-0479">Metal-binding</keyword>
<keyword id="KW-0500">Molybdenum</keyword>
<keyword id="KW-0560">Oxidoreductase</keyword>